<protein>
    <recommendedName>
        <fullName evidence="1">Chorismate pyruvate-lyase</fullName>
        <shortName evidence="1">CL</shortName>
        <shortName evidence="1">CPL</shortName>
        <ecNumber evidence="1">4.1.3.40</ecNumber>
    </recommendedName>
</protein>
<organism>
    <name type="scientific">Salmonella arizonae (strain ATCC BAA-731 / CDC346-86 / RSK2980)</name>
    <dbReference type="NCBI Taxonomy" id="41514"/>
    <lineage>
        <taxon>Bacteria</taxon>
        <taxon>Pseudomonadati</taxon>
        <taxon>Pseudomonadota</taxon>
        <taxon>Gammaproteobacteria</taxon>
        <taxon>Enterobacterales</taxon>
        <taxon>Enterobacteriaceae</taxon>
        <taxon>Salmonella</taxon>
    </lineage>
</organism>
<evidence type="ECO:0000255" key="1">
    <source>
        <dbReference type="HAMAP-Rule" id="MF_01632"/>
    </source>
</evidence>
<name>UBIC_SALAR</name>
<accession>A9MH91</accession>
<feature type="chain" id="PRO_1000088146" description="Chorismate pyruvate-lyase">
    <location>
        <begin position="1"/>
        <end position="165"/>
    </location>
</feature>
<feature type="binding site" evidence="1">
    <location>
        <position position="35"/>
    </location>
    <ligand>
        <name>substrate</name>
    </ligand>
</feature>
<feature type="binding site" evidence="1">
    <location>
        <position position="77"/>
    </location>
    <ligand>
        <name>substrate</name>
    </ligand>
</feature>
<feature type="binding site" evidence="1">
    <location>
        <position position="115"/>
    </location>
    <ligand>
        <name>substrate</name>
    </ligand>
</feature>
<feature type="binding site" evidence="1">
    <location>
        <position position="156"/>
    </location>
    <ligand>
        <name>substrate</name>
    </ligand>
</feature>
<proteinExistence type="inferred from homology"/>
<comment type="function">
    <text evidence="1">Removes the pyruvyl group from chorismate, with concomitant aromatization of the ring, to provide 4-hydroxybenzoate (4HB) for the ubiquinone pathway.</text>
</comment>
<comment type="catalytic activity">
    <reaction evidence="1">
        <text>chorismate = 4-hydroxybenzoate + pyruvate</text>
        <dbReference type="Rhea" id="RHEA:16505"/>
        <dbReference type="ChEBI" id="CHEBI:15361"/>
        <dbReference type="ChEBI" id="CHEBI:17879"/>
        <dbReference type="ChEBI" id="CHEBI:29748"/>
        <dbReference type="EC" id="4.1.3.40"/>
    </reaction>
</comment>
<comment type="pathway">
    <text evidence="1">Cofactor biosynthesis; ubiquinone biosynthesis.</text>
</comment>
<comment type="subunit">
    <text evidence="1">Monomer.</text>
</comment>
<comment type="subcellular location">
    <subcellularLocation>
        <location evidence="1">Cytoplasm</location>
    </subcellularLocation>
</comment>
<comment type="similarity">
    <text evidence="1">Belongs to the UbiC family.</text>
</comment>
<reference key="1">
    <citation type="submission" date="2007-11" db="EMBL/GenBank/DDBJ databases">
        <authorList>
            <consortium name="The Salmonella enterica serovar Arizonae Genome Sequencing Project"/>
            <person name="McClelland M."/>
            <person name="Sanderson E.K."/>
            <person name="Porwollik S."/>
            <person name="Spieth J."/>
            <person name="Clifton W.S."/>
            <person name="Fulton R."/>
            <person name="Chunyan W."/>
            <person name="Wollam A."/>
            <person name="Shah N."/>
            <person name="Pepin K."/>
            <person name="Bhonagiri V."/>
            <person name="Nash W."/>
            <person name="Johnson M."/>
            <person name="Thiruvilangam P."/>
            <person name="Wilson R."/>
        </authorList>
    </citation>
    <scope>NUCLEOTIDE SEQUENCE [LARGE SCALE GENOMIC DNA]</scope>
    <source>
        <strain>ATCC BAA-731 / CDC346-86 / RSK2980</strain>
    </source>
</reference>
<dbReference type="EC" id="4.1.3.40" evidence="1"/>
<dbReference type="EMBL" id="CP000880">
    <property type="protein sequence ID" value="ABX23274.1"/>
    <property type="molecule type" value="Genomic_DNA"/>
</dbReference>
<dbReference type="SMR" id="A9MH91"/>
<dbReference type="STRING" id="41514.SARI_03445"/>
<dbReference type="KEGG" id="ses:SARI_03445"/>
<dbReference type="HOGENOM" id="CLU_096824_1_0_6"/>
<dbReference type="UniPathway" id="UPA00232"/>
<dbReference type="Proteomes" id="UP000002084">
    <property type="component" value="Chromosome"/>
</dbReference>
<dbReference type="GO" id="GO:0005829">
    <property type="term" value="C:cytosol"/>
    <property type="evidence" value="ECO:0007669"/>
    <property type="project" value="TreeGrafter"/>
</dbReference>
<dbReference type="GO" id="GO:0008813">
    <property type="term" value="F:chorismate lyase activity"/>
    <property type="evidence" value="ECO:0007669"/>
    <property type="project" value="UniProtKB-UniRule"/>
</dbReference>
<dbReference type="GO" id="GO:0042866">
    <property type="term" value="P:pyruvate biosynthetic process"/>
    <property type="evidence" value="ECO:0007669"/>
    <property type="project" value="UniProtKB-UniRule"/>
</dbReference>
<dbReference type="GO" id="GO:0006744">
    <property type="term" value="P:ubiquinone biosynthetic process"/>
    <property type="evidence" value="ECO:0007669"/>
    <property type="project" value="UniProtKB-UniRule"/>
</dbReference>
<dbReference type="FunFam" id="3.40.1410.10:FF:000002">
    <property type="entry name" value="Chorismate pyruvate-lyase"/>
    <property type="match status" value="1"/>
</dbReference>
<dbReference type="Gene3D" id="3.40.1410.10">
    <property type="entry name" value="Chorismate lyase-like"/>
    <property type="match status" value="1"/>
</dbReference>
<dbReference type="HAMAP" id="MF_01632">
    <property type="entry name" value="UbiC"/>
    <property type="match status" value="1"/>
</dbReference>
<dbReference type="InterPro" id="IPR007440">
    <property type="entry name" value="Chorismate--pyruvate_lyase"/>
</dbReference>
<dbReference type="InterPro" id="IPR028978">
    <property type="entry name" value="Chorismate_lyase_/UTRA_dom_sf"/>
</dbReference>
<dbReference type="NCBIfam" id="NF008656">
    <property type="entry name" value="PRK11655.1"/>
    <property type="match status" value="1"/>
</dbReference>
<dbReference type="PANTHER" id="PTHR38683">
    <property type="entry name" value="CHORISMATE PYRUVATE-LYASE"/>
    <property type="match status" value="1"/>
</dbReference>
<dbReference type="PANTHER" id="PTHR38683:SF1">
    <property type="entry name" value="CHORISMATE PYRUVATE-LYASE"/>
    <property type="match status" value="1"/>
</dbReference>
<dbReference type="Pfam" id="PF04345">
    <property type="entry name" value="Chor_lyase"/>
    <property type="match status" value="1"/>
</dbReference>
<dbReference type="SUPFAM" id="SSF64288">
    <property type="entry name" value="Chorismate lyase-like"/>
    <property type="match status" value="1"/>
</dbReference>
<gene>
    <name evidence="1" type="primary">ubiC</name>
    <name type="ordered locus">SARI_03445</name>
</gene>
<keyword id="KW-0963">Cytoplasm</keyword>
<keyword id="KW-0456">Lyase</keyword>
<keyword id="KW-0670">Pyruvate</keyword>
<keyword id="KW-1185">Reference proteome</keyword>
<keyword id="KW-0831">Ubiquinone biosynthesis</keyword>
<sequence>MSHPALTQLRALRYFDAIPALEPHLRDWLLLEDSMTKRFEQQGKRVSVTLIREAFVGQSEVEEASGLLPSEARYWLREILLCADGEPWLAGRTVVPESTLCGPEQVLQHLGRTPLGRYLFTSSTLTRDFIEIGRDATLWGRRSRLRLSGKPLLLTELFLPASPLY</sequence>